<organism>
    <name type="scientific">Caenorhabditis elegans</name>
    <dbReference type="NCBI Taxonomy" id="6239"/>
    <lineage>
        <taxon>Eukaryota</taxon>
        <taxon>Metazoa</taxon>
        <taxon>Ecdysozoa</taxon>
        <taxon>Nematoda</taxon>
        <taxon>Chromadorea</taxon>
        <taxon>Rhabditida</taxon>
        <taxon>Rhabditina</taxon>
        <taxon>Rhabditomorpha</taxon>
        <taxon>Rhabditoidea</taxon>
        <taxon>Rhabditidae</taxon>
        <taxon>Peloderinae</taxon>
        <taxon>Caenorhabditis</taxon>
    </lineage>
</organism>
<reference key="1">
    <citation type="journal article" date="1998" name="Science">
        <title>Genome sequence of the nematode C. elegans: a platform for investigating biology.</title>
        <authorList>
            <consortium name="The C. elegans sequencing consortium"/>
        </authorList>
    </citation>
    <scope>NUCLEOTIDE SEQUENCE [LARGE SCALE GENOMIC DNA]</scope>
    <source>
        <strain>Bristol N2</strain>
    </source>
</reference>
<evidence type="ECO:0000255" key="1"/>
<evidence type="ECO:0000256" key="2">
    <source>
        <dbReference type="SAM" id="MobiDB-lite"/>
    </source>
</evidence>
<evidence type="ECO:0000305" key="3"/>
<feature type="chain" id="PRO_0000094039" description="Stomatin-1">
    <location>
        <begin position="1"/>
        <end position="330"/>
    </location>
</feature>
<feature type="transmembrane region" description="Helical" evidence="1">
    <location>
        <begin position="42"/>
        <end position="62"/>
    </location>
</feature>
<feature type="region of interest" description="Disordered" evidence="2">
    <location>
        <begin position="1"/>
        <end position="27"/>
    </location>
</feature>
<feature type="compositionally biased region" description="Polar residues" evidence="2">
    <location>
        <begin position="1"/>
        <end position="19"/>
    </location>
</feature>
<accession>Q19200</accession>
<protein>
    <recommendedName>
        <fullName>Stomatin-1</fullName>
    </recommendedName>
</protein>
<gene>
    <name type="primary">sto-1</name>
    <name type="ORF">F08C6.4</name>
</gene>
<name>STO1_CAEEL</name>
<sequence length="330" mass="35838">MQPSETVEMQEMAQPSGQQRDVEARVQSAPANHSHDAGCTEMFCIAMSYVLIFLTFPVSVFMCIKIVQEYQRAVVFRLGRLVPDVKGPGIFFIIPCIDTFLNIDLRVASYNVPSQEILSRDSVTVSVDAVVYFKVFDPITSVVGVGNATDSTKLLAQTTLRTILGTHTLSEILSDREKISADMKISLDEATEPWGIKVERVELRDVRLPSQMQRAMAAEAEATRDAGAKIIAAEGELRASAALAEAATIISKSEGAMQLRYLHTLNAISSEKTSTIIFPFPMEILGGISKVGSGGTSQNFPVQEMMNAALQSIQRQDTVPATASSSGSRL</sequence>
<comment type="subcellular location">
    <subcellularLocation>
        <location evidence="3">Membrane</location>
        <topology evidence="3">Single-pass membrane protein</topology>
    </subcellularLocation>
</comment>
<comment type="similarity">
    <text evidence="3">Belongs to the band 7/mec-2 family.</text>
</comment>
<keyword id="KW-0472">Membrane</keyword>
<keyword id="KW-1185">Reference proteome</keyword>
<keyword id="KW-0812">Transmembrane</keyword>
<keyword id="KW-1133">Transmembrane helix</keyword>
<proteinExistence type="inferred from homology"/>
<dbReference type="EMBL" id="FO080866">
    <property type="protein sequence ID" value="CCD67347.1"/>
    <property type="molecule type" value="Genomic_DNA"/>
</dbReference>
<dbReference type="PIR" id="T15971">
    <property type="entry name" value="T15971"/>
</dbReference>
<dbReference type="RefSeq" id="NP_509281.1">
    <property type="nucleotide sequence ID" value="NM_076880.8"/>
</dbReference>
<dbReference type="SMR" id="Q19200"/>
<dbReference type="BioGRID" id="45941">
    <property type="interactions" value="2"/>
</dbReference>
<dbReference type="FunCoup" id="Q19200">
    <property type="interactions" value="58"/>
</dbReference>
<dbReference type="STRING" id="6239.F08C6.4a.1"/>
<dbReference type="PaxDb" id="6239-F08C6.4a"/>
<dbReference type="PeptideAtlas" id="Q19200"/>
<dbReference type="EnsemblMetazoa" id="F08C6.4a.1">
    <property type="protein sequence ID" value="F08C6.4a.1"/>
    <property type="gene ID" value="WBGene00006063"/>
</dbReference>
<dbReference type="GeneID" id="181017"/>
<dbReference type="KEGG" id="cel:CELE_F08C6.4"/>
<dbReference type="UCSC" id="F08C6.4b">
    <property type="organism name" value="c. elegans"/>
</dbReference>
<dbReference type="AGR" id="WB:WBGene00006063"/>
<dbReference type="CTD" id="181017"/>
<dbReference type="WormBase" id="F08C6.4a">
    <property type="protein sequence ID" value="CE27924"/>
    <property type="gene ID" value="WBGene00006063"/>
    <property type="gene designation" value="sto-1"/>
</dbReference>
<dbReference type="eggNOG" id="KOG2621">
    <property type="taxonomic scope" value="Eukaryota"/>
</dbReference>
<dbReference type="GeneTree" id="ENSGT01030000234614"/>
<dbReference type="InParanoid" id="Q19200"/>
<dbReference type="OMA" id="CMCIKIV"/>
<dbReference type="OrthoDB" id="2105077at2759"/>
<dbReference type="PhylomeDB" id="Q19200"/>
<dbReference type="Reactome" id="R-CEL-2672351">
    <property type="pathway name" value="Stimuli-sensing channels"/>
</dbReference>
<dbReference type="Reactome" id="R-CEL-373753">
    <property type="pathway name" value="Nephrin family interactions"/>
</dbReference>
<dbReference type="PRO" id="PR:Q19200"/>
<dbReference type="Proteomes" id="UP000001940">
    <property type="component" value="Chromosome X"/>
</dbReference>
<dbReference type="Bgee" id="WBGene00006063">
    <property type="expression patterns" value="Expressed in pharyngeal muscle cell (C elegans) and 3 other cell types or tissues"/>
</dbReference>
<dbReference type="ExpressionAtlas" id="Q19200">
    <property type="expression patterns" value="baseline and differential"/>
</dbReference>
<dbReference type="GO" id="GO:0005886">
    <property type="term" value="C:plasma membrane"/>
    <property type="evidence" value="ECO:0000318"/>
    <property type="project" value="GO_Central"/>
</dbReference>
<dbReference type="FunFam" id="3.30.479.30:FF:000002">
    <property type="entry name" value="band 7 protein AGAP004871"/>
    <property type="match status" value="1"/>
</dbReference>
<dbReference type="Gene3D" id="6.10.250.2090">
    <property type="match status" value="1"/>
</dbReference>
<dbReference type="Gene3D" id="3.30.479.30">
    <property type="entry name" value="Band 7 domain"/>
    <property type="match status" value="1"/>
</dbReference>
<dbReference type="InterPro" id="IPR043202">
    <property type="entry name" value="Band-7_stomatin-like"/>
</dbReference>
<dbReference type="InterPro" id="IPR001107">
    <property type="entry name" value="Band_7"/>
</dbReference>
<dbReference type="InterPro" id="IPR036013">
    <property type="entry name" value="Band_7/SPFH_dom_sf"/>
</dbReference>
<dbReference type="InterPro" id="IPR018080">
    <property type="entry name" value="Band_7/stomatin-like_CS"/>
</dbReference>
<dbReference type="InterPro" id="IPR001972">
    <property type="entry name" value="Stomatin_HflK_fam"/>
</dbReference>
<dbReference type="PANTHER" id="PTHR10264">
    <property type="entry name" value="BAND 7 PROTEIN-RELATED"/>
    <property type="match status" value="1"/>
</dbReference>
<dbReference type="PANTHER" id="PTHR10264:SF129">
    <property type="entry name" value="STOMATIN-1"/>
    <property type="match status" value="1"/>
</dbReference>
<dbReference type="Pfam" id="PF01145">
    <property type="entry name" value="Band_7"/>
    <property type="match status" value="1"/>
</dbReference>
<dbReference type="PRINTS" id="PR00721">
    <property type="entry name" value="STOMATIN"/>
</dbReference>
<dbReference type="SMART" id="SM00244">
    <property type="entry name" value="PHB"/>
    <property type="match status" value="1"/>
</dbReference>
<dbReference type="SUPFAM" id="SSF117892">
    <property type="entry name" value="Band 7/SPFH domain"/>
    <property type="match status" value="1"/>
</dbReference>
<dbReference type="PROSITE" id="PS01270">
    <property type="entry name" value="BAND_7"/>
    <property type="match status" value="1"/>
</dbReference>